<gene>
    <name evidence="1" type="primary">hemE</name>
    <name type="ordered locus">YpAngola_A0459</name>
</gene>
<name>DCUP_YERPG</name>
<accession>A9R8D5</accession>
<feature type="chain" id="PRO_1000100030" description="Uroporphyrinogen decarboxylase">
    <location>
        <begin position="1"/>
        <end position="355"/>
    </location>
</feature>
<feature type="binding site" evidence="1">
    <location>
        <begin position="27"/>
        <end position="31"/>
    </location>
    <ligand>
        <name>substrate</name>
    </ligand>
</feature>
<feature type="binding site" evidence="1">
    <location>
        <position position="77"/>
    </location>
    <ligand>
        <name>substrate</name>
    </ligand>
</feature>
<feature type="binding site" evidence="1">
    <location>
        <position position="154"/>
    </location>
    <ligand>
        <name>substrate</name>
    </ligand>
</feature>
<feature type="binding site" evidence="1">
    <location>
        <position position="209"/>
    </location>
    <ligand>
        <name>substrate</name>
    </ligand>
</feature>
<feature type="binding site" evidence="1">
    <location>
        <position position="327"/>
    </location>
    <ligand>
        <name>substrate</name>
    </ligand>
</feature>
<feature type="site" description="Transition state stabilizer" evidence="1">
    <location>
        <position position="77"/>
    </location>
</feature>
<dbReference type="EC" id="4.1.1.37" evidence="1"/>
<dbReference type="EMBL" id="CP000901">
    <property type="protein sequence ID" value="ABX88255.1"/>
    <property type="molecule type" value="Genomic_DNA"/>
</dbReference>
<dbReference type="RefSeq" id="WP_002210686.1">
    <property type="nucleotide sequence ID" value="NZ_CP009935.1"/>
</dbReference>
<dbReference type="SMR" id="A9R8D5"/>
<dbReference type="GeneID" id="57974983"/>
<dbReference type="KEGG" id="ypg:YpAngola_A0459"/>
<dbReference type="PATRIC" id="fig|349746.12.peg.1415"/>
<dbReference type="UniPathway" id="UPA00251">
    <property type="reaction ID" value="UER00321"/>
</dbReference>
<dbReference type="GO" id="GO:0005829">
    <property type="term" value="C:cytosol"/>
    <property type="evidence" value="ECO:0007669"/>
    <property type="project" value="TreeGrafter"/>
</dbReference>
<dbReference type="GO" id="GO:0004853">
    <property type="term" value="F:uroporphyrinogen decarboxylase activity"/>
    <property type="evidence" value="ECO:0007669"/>
    <property type="project" value="UniProtKB-UniRule"/>
</dbReference>
<dbReference type="GO" id="GO:0019353">
    <property type="term" value="P:protoporphyrinogen IX biosynthetic process from glutamate"/>
    <property type="evidence" value="ECO:0007669"/>
    <property type="project" value="TreeGrafter"/>
</dbReference>
<dbReference type="CDD" id="cd00717">
    <property type="entry name" value="URO-D"/>
    <property type="match status" value="1"/>
</dbReference>
<dbReference type="FunFam" id="3.20.20.210:FF:000001">
    <property type="entry name" value="Uroporphyrinogen decarboxylase"/>
    <property type="match status" value="1"/>
</dbReference>
<dbReference type="Gene3D" id="3.20.20.210">
    <property type="match status" value="1"/>
</dbReference>
<dbReference type="HAMAP" id="MF_00218">
    <property type="entry name" value="URO_D"/>
    <property type="match status" value="1"/>
</dbReference>
<dbReference type="InterPro" id="IPR038071">
    <property type="entry name" value="UROD/MetE-like_sf"/>
</dbReference>
<dbReference type="InterPro" id="IPR006361">
    <property type="entry name" value="Uroporphyrinogen_deCO2ase_HemE"/>
</dbReference>
<dbReference type="InterPro" id="IPR000257">
    <property type="entry name" value="Uroporphyrinogen_deCOase"/>
</dbReference>
<dbReference type="NCBIfam" id="TIGR01464">
    <property type="entry name" value="hemE"/>
    <property type="match status" value="1"/>
</dbReference>
<dbReference type="PANTHER" id="PTHR21091">
    <property type="entry name" value="METHYLTETRAHYDROFOLATE:HOMOCYSTEINE METHYLTRANSFERASE RELATED"/>
    <property type="match status" value="1"/>
</dbReference>
<dbReference type="PANTHER" id="PTHR21091:SF169">
    <property type="entry name" value="UROPORPHYRINOGEN DECARBOXYLASE"/>
    <property type="match status" value="1"/>
</dbReference>
<dbReference type="Pfam" id="PF01208">
    <property type="entry name" value="URO-D"/>
    <property type="match status" value="1"/>
</dbReference>
<dbReference type="SUPFAM" id="SSF51726">
    <property type="entry name" value="UROD/MetE-like"/>
    <property type="match status" value="1"/>
</dbReference>
<dbReference type="PROSITE" id="PS00906">
    <property type="entry name" value="UROD_1"/>
    <property type="match status" value="1"/>
</dbReference>
<dbReference type="PROSITE" id="PS00907">
    <property type="entry name" value="UROD_2"/>
    <property type="match status" value="1"/>
</dbReference>
<protein>
    <recommendedName>
        <fullName evidence="1">Uroporphyrinogen decarboxylase</fullName>
        <shortName evidence="1">UPD</shortName>
        <shortName evidence="1">URO-D</shortName>
        <ecNumber evidence="1">4.1.1.37</ecNumber>
    </recommendedName>
</protein>
<comment type="function">
    <text evidence="1">Catalyzes the decarboxylation of four acetate groups of uroporphyrinogen-III to yield coproporphyrinogen-III.</text>
</comment>
<comment type="catalytic activity">
    <reaction evidence="1">
        <text>uroporphyrinogen III + 4 H(+) = coproporphyrinogen III + 4 CO2</text>
        <dbReference type="Rhea" id="RHEA:19865"/>
        <dbReference type="ChEBI" id="CHEBI:15378"/>
        <dbReference type="ChEBI" id="CHEBI:16526"/>
        <dbReference type="ChEBI" id="CHEBI:57308"/>
        <dbReference type="ChEBI" id="CHEBI:57309"/>
        <dbReference type="EC" id="4.1.1.37"/>
    </reaction>
</comment>
<comment type="pathway">
    <text evidence="1">Porphyrin-containing compound metabolism; protoporphyrin-IX biosynthesis; coproporphyrinogen-III from 5-aminolevulinate: step 4/4.</text>
</comment>
<comment type="subunit">
    <text evidence="1">Homodimer.</text>
</comment>
<comment type="subcellular location">
    <subcellularLocation>
        <location evidence="1">Cytoplasm</location>
    </subcellularLocation>
</comment>
<comment type="similarity">
    <text evidence="1">Belongs to the uroporphyrinogen decarboxylase family.</text>
</comment>
<reference key="1">
    <citation type="journal article" date="2010" name="J. Bacteriol.">
        <title>Genome sequence of the deep-rooted Yersinia pestis strain Angola reveals new insights into the evolution and pangenome of the plague bacterium.</title>
        <authorList>
            <person name="Eppinger M."/>
            <person name="Worsham P.L."/>
            <person name="Nikolich M.P."/>
            <person name="Riley D.R."/>
            <person name="Sebastian Y."/>
            <person name="Mou S."/>
            <person name="Achtman M."/>
            <person name="Lindler L.E."/>
            <person name="Ravel J."/>
        </authorList>
    </citation>
    <scope>NUCLEOTIDE SEQUENCE [LARGE SCALE GENOMIC DNA]</scope>
    <source>
        <strain>Angola</strain>
    </source>
</reference>
<proteinExistence type="inferred from homology"/>
<evidence type="ECO:0000255" key="1">
    <source>
        <dbReference type="HAMAP-Rule" id="MF_00218"/>
    </source>
</evidence>
<keyword id="KW-0963">Cytoplasm</keyword>
<keyword id="KW-0210">Decarboxylase</keyword>
<keyword id="KW-0456">Lyase</keyword>
<keyword id="KW-0627">Porphyrin biosynthesis</keyword>
<sequence length="355" mass="39268">MNELKNDRYLRALLRQPVDMTPVWMMRQAGRYLPEYKATRAIAGDFMSLCKNAELACEVTMQPLRRYPLDAAILFSDILTIPDAMGLGLYFETGEGPRFQSPITCRADVEKLPIPDPEQELGYVMNAVRTIRRELAGSVPLIGFSGSPWTLATYMVEGGSSKAFTKLKKMMYAEPQTLHLLLDKLADSVILYLNAQIKAGAQSVMIFDTWGGVLTGRDYHEFSLNYMHKIVDGLIRENEGRRVPVTLFTKGGGPWLEAMAATGCDALGLDWTTDIADARRRVGDKVALQGNMDPSVLYAPPARIEQEVSTILASFGQGEGHVFNLGHGIHQDVPPAHAGAFVNAVHALSRPYHQK</sequence>
<organism>
    <name type="scientific">Yersinia pestis bv. Antiqua (strain Angola)</name>
    <dbReference type="NCBI Taxonomy" id="349746"/>
    <lineage>
        <taxon>Bacteria</taxon>
        <taxon>Pseudomonadati</taxon>
        <taxon>Pseudomonadota</taxon>
        <taxon>Gammaproteobacteria</taxon>
        <taxon>Enterobacterales</taxon>
        <taxon>Yersiniaceae</taxon>
        <taxon>Yersinia</taxon>
    </lineage>
</organism>